<name>DLX2_MOUSE</name>
<protein>
    <recommendedName>
        <fullName>Homeobox protein DLX-2</fullName>
    </recommendedName>
    <alternativeName>
        <fullName>Homeobox protein TES-1</fullName>
    </alternativeName>
</protein>
<gene>
    <name type="primary">Dlx2</name>
    <name type="synonym">Tes-1</name>
    <name type="synonym">Tes1</name>
</gene>
<sequence>MTGVFDSLVADMHSTQITASSTYHQHQQPPSGAGAGPGGNSNSSSSNSSLHKPQESPTLPVSTATDSSYYTNQQHPAGGGGGGASPYAHMGSYQYHASGLNNVSYSAKSSYDLGYTAAYTSYAPYGTSSSPVNNEPDKEDLEPEIRIVNGKPKKVRKPRTIYSSFQLAALQRRFQKTQYLALPERAELAASLGLTQTQVKIWFQNRRSKFKKMWKSGEIPTEQHPGASASPPCASPPVSAPASWDFGAPQRMAGGGPGSGGGGAGSSGSSPSSAASAFLGNYPWYHQASGSASHLQATAPLLHPSQTPQAHHHHHHHHHAGGGAPVSAGTIF</sequence>
<comment type="function">
    <text evidence="4 6 7">Acts as a transcriptional activator (PubMed:21875655). Activates transcription of CGA/alpha-GSU, via binding to the downstream activin regulatory element (DARE) in the gene promoter (PubMed:23371388). Plays a role in terminal differentiation of interneurons, such as amacrine and bipolar cells in the developing retina (PubMed:21875655). Likely to play a regulatory role in the development of the ventral forebrain (PubMed:1678612). May play a role in craniofacial patterning and morphogenesis (PubMed:1678612).</text>
</comment>
<comment type="subunit">
    <text evidence="6">Interacts (via homeobox DNA-binding domain) with POU4F2; this interaction enhances retinal ganglion cell (RGC) differentiation (PubMed:21875655).</text>
</comment>
<comment type="subcellular location">
    <subcellularLocation>
        <location evidence="10">Nucleus</location>
    </subcellularLocation>
</comment>
<comment type="tissue specificity">
    <text evidence="6 9">Expressed only in neural and other ectodermal structures of the head: the brain, the vomeronasal organ, and the preameloblasts of the teeth (PubMed:8098616). Primarily expressed in the germinal cells of the ventral forebrain in the midgestational embryo, and in both dorsal and ventral ventricular zones in late embryogenesis and early postnatal life (PubMed:8098616). Expressed in the inner nuclear layer of the retina (PubMed:21875655).</text>
</comment>
<comment type="developmental stage">
    <text evidence="4 5 6 8">Developmentally regulated (PubMed:1678612, PubMed:1687503). Initially expressed in the branchial arches at 8.5 dpc, expression is confined to the maxillary and mandibular portions of the branchial arches at 9.5 dpc (PubMed:7893603). Expressed in the caudal portion of the mandibular process and the forebrain at 10.5 dpc (PubMed:7893603). Expressed in developing retinal progenitor cells at 12 dpc (PubMed:21875655). Expressed in the auditory hillocks, ventral olfactory bulbs, the oral epithelium and the external naris at 12.5 dpc (PubMed:7893603). Expressed in the condensed mesenchyme from which the malleus and incus develop at 13.5 dpc (PubMed:7893603). Expressed in the developing otic vesicle at 11.5 dpc, expression is then restricted to the vestibular region at 12.5 and 13.5 dpc (PubMed:7893603). Expression declines thereafter with no expression detected in the developing inner ear at 14.5 dpc (PubMed:7893603). Expressed in the oral epithelium and adjacent mesenchyme at sites of tooth development at 12.5 dpc (PubMed:7893603). Found in the dental epithelium and the adjacent mesenchyme of both incisors and molars at 13.5 dpc, expression is restricted to the ectoderm-derived ameloblast layer at 16.5 dpc (PubMed:7893603). Expressed in a patchy pattern in the epithelium of the upper lip at 12.5 dpc, however expression is lost by 14.5 dpc (PubMed:7893603).</text>
</comment>
<comment type="PTM">
    <text>Phosphorylated by serine/threonine kinases.</text>
</comment>
<comment type="similarity">
    <text evidence="10">Belongs to the distal-less homeobox family.</text>
</comment>
<organism>
    <name type="scientific">Mus musculus</name>
    <name type="common">Mouse</name>
    <dbReference type="NCBI Taxonomy" id="10090"/>
    <lineage>
        <taxon>Eukaryota</taxon>
        <taxon>Metazoa</taxon>
        <taxon>Chordata</taxon>
        <taxon>Craniata</taxon>
        <taxon>Vertebrata</taxon>
        <taxon>Euteleostomi</taxon>
        <taxon>Mammalia</taxon>
        <taxon>Eutheria</taxon>
        <taxon>Euarchontoglires</taxon>
        <taxon>Glires</taxon>
        <taxon>Rodentia</taxon>
        <taxon>Myomorpha</taxon>
        <taxon>Muroidea</taxon>
        <taxon>Muridae</taxon>
        <taxon>Murinae</taxon>
        <taxon>Mus</taxon>
        <taxon>Mus</taxon>
    </lineage>
</organism>
<accession>P40764</accession>
<dbReference type="EMBL" id="M80540">
    <property type="protein sequence ID" value="AAA40412.1"/>
    <property type="molecule type" value="mRNA"/>
</dbReference>
<dbReference type="EMBL" id="M83184">
    <property type="protein sequence ID" value="AAA18487.1"/>
    <property type="molecule type" value="mRNA"/>
</dbReference>
<dbReference type="EMBL" id="U51002">
    <property type="protein sequence ID" value="AAB40901.1"/>
    <property type="molecule type" value="Genomic_DNA"/>
</dbReference>
<dbReference type="CCDS" id="CCDS16117.1"/>
<dbReference type="PIR" id="A45581">
    <property type="entry name" value="A45581"/>
</dbReference>
<dbReference type="PIR" id="JH0465">
    <property type="entry name" value="JH0465"/>
</dbReference>
<dbReference type="RefSeq" id="NP_034184.1">
    <property type="nucleotide sequence ID" value="NM_010054.3"/>
</dbReference>
<dbReference type="SMR" id="P40764"/>
<dbReference type="BioGRID" id="199235">
    <property type="interactions" value="4"/>
</dbReference>
<dbReference type="FunCoup" id="P40764">
    <property type="interactions" value="1021"/>
</dbReference>
<dbReference type="IntAct" id="P40764">
    <property type="interactions" value="3"/>
</dbReference>
<dbReference type="STRING" id="10090.ENSMUSP00000024159"/>
<dbReference type="iPTMnet" id="P40764"/>
<dbReference type="PhosphoSitePlus" id="P40764"/>
<dbReference type="PaxDb" id="10090-ENSMUSP00000024159"/>
<dbReference type="PeptideAtlas" id="P40764"/>
<dbReference type="Antibodypedia" id="19409">
    <property type="antibodies" value="357 antibodies from 32 providers"/>
</dbReference>
<dbReference type="DNASU" id="13392"/>
<dbReference type="Ensembl" id="ENSMUST00000024159.8">
    <property type="protein sequence ID" value="ENSMUSP00000024159.7"/>
    <property type="gene ID" value="ENSMUSG00000023391.9"/>
</dbReference>
<dbReference type="GeneID" id="13392"/>
<dbReference type="KEGG" id="mmu:13392"/>
<dbReference type="UCSC" id="uc008kax.2">
    <property type="organism name" value="mouse"/>
</dbReference>
<dbReference type="AGR" id="MGI:94902"/>
<dbReference type="CTD" id="1746"/>
<dbReference type="MGI" id="MGI:94902">
    <property type="gene designation" value="Dlx2"/>
</dbReference>
<dbReference type="VEuPathDB" id="HostDB:ENSMUSG00000023391"/>
<dbReference type="eggNOG" id="KOG0850">
    <property type="taxonomic scope" value="Eukaryota"/>
</dbReference>
<dbReference type="GeneTree" id="ENSGT00940000160127"/>
<dbReference type="HOGENOM" id="CLU_074733_1_1_1"/>
<dbReference type="InParanoid" id="P40764"/>
<dbReference type="OMA" id="YSWYHQA"/>
<dbReference type="OrthoDB" id="6159439at2759"/>
<dbReference type="PhylomeDB" id="P40764"/>
<dbReference type="TreeFam" id="TF350606"/>
<dbReference type="BioGRID-ORCS" id="13392">
    <property type="hits" value="3 hits in 78 CRISPR screens"/>
</dbReference>
<dbReference type="ChiTaRS" id="Tes">
    <property type="organism name" value="mouse"/>
</dbReference>
<dbReference type="PRO" id="PR:P40764"/>
<dbReference type="Proteomes" id="UP000000589">
    <property type="component" value="Chromosome 2"/>
</dbReference>
<dbReference type="RNAct" id="P40764">
    <property type="molecule type" value="protein"/>
</dbReference>
<dbReference type="Bgee" id="ENSMUSG00000023391">
    <property type="expression patterns" value="Expressed in entire pharyngeal arch associated mesenchyme and 179 other cell types or tissues"/>
</dbReference>
<dbReference type="ExpressionAtlas" id="P40764">
    <property type="expression patterns" value="baseline and differential"/>
</dbReference>
<dbReference type="GO" id="GO:0005634">
    <property type="term" value="C:nucleus"/>
    <property type="evidence" value="ECO:0000314"/>
    <property type="project" value="MGI"/>
</dbReference>
<dbReference type="GO" id="GO:0003682">
    <property type="term" value="F:chromatin binding"/>
    <property type="evidence" value="ECO:0000314"/>
    <property type="project" value="MGI"/>
</dbReference>
<dbReference type="GO" id="GO:0003677">
    <property type="term" value="F:DNA binding"/>
    <property type="evidence" value="ECO:0000314"/>
    <property type="project" value="MGI"/>
</dbReference>
<dbReference type="GO" id="GO:0001228">
    <property type="term" value="F:DNA-binding transcription activator activity, RNA polymerase II-specific"/>
    <property type="evidence" value="ECO:0000314"/>
    <property type="project" value="NTNU_SB"/>
</dbReference>
<dbReference type="GO" id="GO:0000977">
    <property type="term" value="F:RNA polymerase II transcription regulatory region sequence-specific DNA binding"/>
    <property type="evidence" value="ECO:0000314"/>
    <property type="project" value="NTNU_SB"/>
</dbReference>
<dbReference type="GO" id="GO:0003727">
    <property type="term" value="F:single-stranded RNA binding"/>
    <property type="evidence" value="ECO:0000353"/>
    <property type="project" value="MGI"/>
</dbReference>
<dbReference type="GO" id="GO:0000976">
    <property type="term" value="F:transcription cis-regulatory region binding"/>
    <property type="evidence" value="ECO:0000314"/>
    <property type="project" value="UniProtKB"/>
</dbReference>
<dbReference type="GO" id="GO:0048755">
    <property type="term" value="P:branching morphogenesis of a nerve"/>
    <property type="evidence" value="ECO:0000315"/>
    <property type="project" value="MGI"/>
</dbReference>
<dbReference type="GO" id="GO:0051216">
    <property type="term" value="P:cartilage development"/>
    <property type="evidence" value="ECO:0000315"/>
    <property type="project" value="MGI"/>
</dbReference>
<dbReference type="GO" id="GO:0021892">
    <property type="term" value="P:cerebral cortex GABAergic interneuron differentiation"/>
    <property type="evidence" value="ECO:0000316"/>
    <property type="project" value="MGI"/>
</dbReference>
<dbReference type="GO" id="GO:0021893">
    <property type="term" value="P:cerebral cortex GABAergic interneuron fate commitment"/>
    <property type="evidence" value="ECO:0000316"/>
    <property type="project" value="MGI"/>
</dbReference>
<dbReference type="GO" id="GO:0048701">
    <property type="term" value="P:embryonic cranial skeleton morphogenesis"/>
    <property type="evidence" value="ECO:0000315"/>
    <property type="project" value="MGI"/>
</dbReference>
<dbReference type="GO" id="GO:0048706">
    <property type="term" value="P:embryonic skeletal system development"/>
    <property type="evidence" value="ECO:0000315"/>
    <property type="project" value="MGI"/>
</dbReference>
<dbReference type="GO" id="GO:0021879">
    <property type="term" value="P:forebrain neuron differentiation"/>
    <property type="evidence" value="ECO:0000316"/>
    <property type="project" value="MGI"/>
</dbReference>
<dbReference type="GO" id="GO:0097154">
    <property type="term" value="P:GABAergic neuron differentiation"/>
    <property type="evidence" value="ECO:0000316"/>
    <property type="project" value="MGI"/>
</dbReference>
<dbReference type="GO" id="GO:0021766">
    <property type="term" value="P:hippocampus development"/>
    <property type="evidence" value="ECO:0000316"/>
    <property type="project" value="MGI"/>
</dbReference>
<dbReference type="GO" id="GO:0045746">
    <property type="term" value="P:negative regulation of Notch signaling pathway"/>
    <property type="evidence" value="ECO:0000316"/>
    <property type="project" value="MGI"/>
</dbReference>
<dbReference type="GO" id="GO:0048715">
    <property type="term" value="P:negative regulation of oligodendrocyte differentiation"/>
    <property type="evidence" value="ECO:0000316"/>
    <property type="project" value="MGI"/>
</dbReference>
<dbReference type="GO" id="GO:0046533">
    <property type="term" value="P:negative regulation of photoreceptor cell differentiation"/>
    <property type="evidence" value="ECO:0000315"/>
    <property type="project" value="UniProtKB"/>
</dbReference>
<dbReference type="GO" id="GO:0000122">
    <property type="term" value="P:negative regulation of transcription by RNA polymerase II"/>
    <property type="evidence" value="ECO:0000316"/>
    <property type="project" value="MGI"/>
</dbReference>
<dbReference type="GO" id="GO:0014016">
    <property type="term" value="P:neuroblast differentiation"/>
    <property type="evidence" value="ECO:0000315"/>
    <property type="project" value="MGI"/>
</dbReference>
<dbReference type="GO" id="GO:0007219">
    <property type="term" value="P:Notch signaling pathway"/>
    <property type="evidence" value="ECO:0000316"/>
    <property type="project" value="MGI"/>
</dbReference>
<dbReference type="GO" id="GO:0042475">
    <property type="term" value="P:odontogenesis of dentin-containing tooth"/>
    <property type="evidence" value="ECO:0000316"/>
    <property type="project" value="MGI"/>
</dbReference>
<dbReference type="GO" id="GO:0021772">
    <property type="term" value="P:olfactory bulb development"/>
    <property type="evidence" value="ECO:0000315"/>
    <property type="project" value="MGI"/>
</dbReference>
<dbReference type="GO" id="GO:0048709">
    <property type="term" value="P:oligodendrocyte differentiation"/>
    <property type="evidence" value="ECO:0000316"/>
    <property type="project" value="MGI"/>
</dbReference>
<dbReference type="GO" id="GO:1902871">
    <property type="term" value="P:positive regulation of amacrine cell differentiation"/>
    <property type="evidence" value="ECO:0000315"/>
    <property type="project" value="UniProtKB"/>
</dbReference>
<dbReference type="GO" id="GO:0045597">
    <property type="term" value="P:positive regulation of cell differentiation"/>
    <property type="evidence" value="ECO:0000315"/>
    <property type="project" value="UniProtKB"/>
</dbReference>
<dbReference type="GO" id="GO:0045944">
    <property type="term" value="P:positive regulation of transcription by RNA polymerase II"/>
    <property type="evidence" value="ECO:0000314"/>
    <property type="project" value="UniProtKB"/>
</dbReference>
<dbReference type="GO" id="GO:0009954">
    <property type="term" value="P:proximal/distal pattern formation"/>
    <property type="evidence" value="ECO:0000315"/>
    <property type="project" value="MGI"/>
</dbReference>
<dbReference type="GO" id="GO:0006357">
    <property type="term" value="P:regulation of transcription by RNA polymerase II"/>
    <property type="evidence" value="ECO:0000316"/>
    <property type="project" value="MGI"/>
</dbReference>
<dbReference type="GO" id="GO:0021544">
    <property type="term" value="P:subpallium development"/>
    <property type="evidence" value="ECO:0000316"/>
    <property type="project" value="MGI"/>
</dbReference>
<dbReference type="CDD" id="cd00086">
    <property type="entry name" value="homeodomain"/>
    <property type="match status" value="1"/>
</dbReference>
<dbReference type="FunFam" id="1.10.10.60:FF:000048">
    <property type="entry name" value="Distal-less homeobox 2"/>
    <property type="match status" value="1"/>
</dbReference>
<dbReference type="Gene3D" id="1.10.10.60">
    <property type="entry name" value="Homeodomain-like"/>
    <property type="match status" value="1"/>
</dbReference>
<dbReference type="InterPro" id="IPR050460">
    <property type="entry name" value="Distal-less_Homeobox_TF"/>
</dbReference>
<dbReference type="InterPro" id="IPR022135">
    <property type="entry name" value="Distal-less_N"/>
</dbReference>
<dbReference type="InterPro" id="IPR001356">
    <property type="entry name" value="HD"/>
</dbReference>
<dbReference type="InterPro" id="IPR020479">
    <property type="entry name" value="HD_metazoa"/>
</dbReference>
<dbReference type="InterPro" id="IPR017970">
    <property type="entry name" value="Homeobox_CS"/>
</dbReference>
<dbReference type="InterPro" id="IPR009057">
    <property type="entry name" value="Homeodomain-like_sf"/>
</dbReference>
<dbReference type="InterPro" id="IPR000047">
    <property type="entry name" value="HTH_motif"/>
</dbReference>
<dbReference type="PANTHER" id="PTHR24327">
    <property type="entry name" value="HOMEOBOX PROTEIN"/>
    <property type="match status" value="1"/>
</dbReference>
<dbReference type="PANTHER" id="PTHR24327:SF23">
    <property type="entry name" value="HOMEOBOX PROTEIN DLX-2"/>
    <property type="match status" value="1"/>
</dbReference>
<dbReference type="Pfam" id="PF12413">
    <property type="entry name" value="DLL_N"/>
    <property type="match status" value="1"/>
</dbReference>
<dbReference type="Pfam" id="PF00046">
    <property type="entry name" value="Homeodomain"/>
    <property type="match status" value="1"/>
</dbReference>
<dbReference type="PRINTS" id="PR00024">
    <property type="entry name" value="HOMEOBOX"/>
</dbReference>
<dbReference type="PRINTS" id="PR00031">
    <property type="entry name" value="HTHREPRESSR"/>
</dbReference>
<dbReference type="SMART" id="SM00389">
    <property type="entry name" value="HOX"/>
    <property type="match status" value="1"/>
</dbReference>
<dbReference type="SUPFAM" id="SSF46689">
    <property type="entry name" value="Homeodomain-like"/>
    <property type="match status" value="1"/>
</dbReference>
<dbReference type="PROSITE" id="PS00027">
    <property type="entry name" value="HOMEOBOX_1"/>
    <property type="match status" value="1"/>
</dbReference>
<dbReference type="PROSITE" id="PS50071">
    <property type="entry name" value="HOMEOBOX_2"/>
    <property type="match status" value="1"/>
</dbReference>
<evidence type="ECO:0000250" key="1">
    <source>
        <dbReference type="UniProtKB" id="Q07687"/>
    </source>
</evidence>
<evidence type="ECO:0000255" key="2">
    <source>
        <dbReference type="PROSITE-ProRule" id="PRU00108"/>
    </source>
</evidence>
<evidence type="ECO:0000256" key="3">
    <source>
        <dbReference type="SAM" id="MobiDB-lite"/>
    </source>
</evidence>
<evidence type="ECO:0000269" key="4">
    <source>
    </source>
</evidence>
<evidence type="ECO:0000269" key="5">
    <source>
    </source>
</evidence>
<evidence type="ECO:0000269" key="6">
    <source>
    </source>
</evidence>
<evidence type="ECO:0000269" key="7">
    <source>
    </source>
</evidence>
<evidence type="ECO:0000269" key="8">
    <source>
    </source>
</evidence>
<evidence type="ECO:0000269" key="9">
    <source>
    </source>
</evidence>
<evidence type="ECO:0000305" key="10"/>
<proteinExistence type="evidence at protein level"/>
<feature type="chain" id="PRO_0000049024" description="Homeobox protein DLX-2">
    <location>
        <begin position="1"/>
        <end position="332"/>
    </location>
</feature>
<feature type="DNA-binding region" description="Homeobox" evidence="2">
    <location>
        <begin position="155"/>
        <end position="214"/>
    </location>
</feature>
<feature type="region of interest" description="Disordered" evidence="3">
    <location>
        <begin position="19"/>
        <end position="83"/>
    </location>
</feature>
<feature type="region of interest" description="Disordered" evidence="3">
    <location>
        <begin position="219"/>
        <end position="272"/>
    </location>
</feature>
<feature type="region of interest" description="Disordered" evidence="3">
    <location>
        <begin position="304"/>
        <end position="332"/>
    </location>
</feature>
<feature type="compositionally biased region" description="Polar residues" evidence="3">
    <location>
        <begin position="19"/>
        <end position="28"/>
    </location>
</feature>
<feature type="compositionally biased region" description="Low complexity" evidence="3">
    <location>
        <begin position="40"/>
        <end position="49"/>
    </location>
</feature>
<feature type="compositionally biased region" description="Polar residues" evidence="3">
    <location>
        <begin position="55"/>
        <end position="75"/>
    </location>
</feature>
<feature type="compositionally biased region" description="Gly residues" evidence="3">
    <location>
        <begin position="253"/>
        <end position="266"/>
    </location>
</feature>
<feature type="compositionally biased region" description="Basic residues" evidence="3">
    <location>
        <begin position="310"/>
        <end position="320"/>
    </location>
</feature>
<feature type="modified residue" description="Phosphoserine" evidence="1">
    <location>
        <position position="235"/>
    </location>
</feature>
<keyword id="KW-0010">Activator</keyword>
<keyword id="KW-0217">Developmental protein</keyword>
<keyword id="KW-0221">Differentiation</keyword>
<keyword id="KW-0238">DNA-binding</keyword>
<keyword id="KW-0371">Homeobox</keyword>
<keyword id="KW-0539">Nucleus</keyword>
<keyword id="KW-0597">Phosphoprotein</keyword>
<keyword id="KW-1185">Reference proteome</keyword>
<keyword id="KW-0804">Transcription</keyword>
<keyword id="KW-0805">Transcription regulation</keyword>
<reference key="1">
    <citation type="journal article" date="1991" name="Neuron">
        <title>Isolation and characterization of a novel cDNA clone encoding a homeodomain that is developmentally regulated in the ventral forebrain.</title>
        <authorList>
            <person name="Porteus M.H."/>
            <person name="Bulfone A."/>
            <person name="Ciaranello R.D."/>
            <person name="Rubenstein J.L.R."/>
        </authorList>
    </citation>
    <scope>NUCLEOTIDE SEQUENCE [MRNA]</scope>
    <scope>POSSIBLE FUNCTION</scope>
    <scope>DEVELOPMENTAL STAGE</scope>
    <source>
        <strain>BALB/cJ</strain>
    </source>
</reference>
<reference key="2">
    <citation type="journal article" date="1992" name="Neuron">
        <title>A partial cDNA sequence of the Dlx-2 cDNA.</title>
        <authorList>
            <person name="Porteus M.H."/>
            <person name="Bulfone A."/>
            <person name="Ciaranello R.D."/>
            <person name="Rubenstein J.L.R."/>
        </authorList>
    </citation>
    <scope>SEQUENCE REVISION</scope>
</reference>
<reference key="3">
    <citation type="journal article" date="1996" name="Genomics">
        <title>Sequence, organization, and transcription of the Dlx-1 and Dlx-2 locus.</title>
        <authorList>
            <person name="McGuinness T."/>
            <person name="Porteus M.H."/>
            <person name="Smiga S."/>
            <person name="Bulfone A."/>
            <person name="Kingsley C."/>
            <person name="Qiu M."/>
            <person name="Liu J.K."/>
            <person name="Long J.E."/>
            <person name="Xu D."/>
            <person name="Rubenstein J.L.R."/>
        </authorList>
    </citation>
    <scope>NUCLEOTIDE SEQUENCE [GENOMIC DNA]</scope>
    <source>
        <strain>129</strain>
    </source>
</reference>
<reference key="4">
    <citation type="journal article" date="1991" name="New Biol.">
        <title>Spatially restricted expression of a member of a new family of murine Distal-less homeobox genes in the developing forebrain.</title>
        <authorList>
            <person name="Robinson G.W."/>
            <person name="Wray S."/>
            <person name="Mahon K.A."/>
        </authorList>
    </citation>
    <scope>NUCLEOTIDE SEQUENCE OF 26-332</scope>
    <scope>DEVELOPMENTAL STAGE</scope>
</reference>
<reference key="5">
    <citation type="journal article" date="1993" name="Mech. Dev.">
        <title>The mouse Dlx-2 (Tes-1) gene is expressed in spatially restricted domains of the forebrain, face and limbs in midgestation mouse embryos.</title>
        <authorList>
            <person name="Bulfone A."/>
            <person name="Kim H.J."/>
            <person name="Puelles L."/>
            <person name="Porteus M.H."/>
            <person name="Grippo J.F."/>
            <person name="Rubenstein J.L."/>
        </authorList>
    </citation>
    <scope>TISSUE SPECIFICITY</scope>
</reference>
<reference key="6">
    <citation type="journal article" date="1993" name="Mech. Dev.">
        <authorList>
            <person name="Bulfone A."/>
            <person name="Kim H.J."/>
            <person name="Puelles L."/>
            <person name="Porteus M.H."/>
            <person name="Grippo J.F."/>
            <person name="Rubenstein J.L."/>
        </authorList>
    </citation>
    <scope>ERRATUM OF PUBMED:8098616</scope>
    <scope>SEQUENCE REVISION</scope>
</reference>
<reference key="7">
    <citation type="journal article" date="1994" name="Mech. Dev.">
        <title>Differential and overlapping expression domains of Dlx-2 and Dlx-3 suggest distinct roles for Distal-less homeobox genes in craniofacial development.</title>
        <authorList>
            <person name="Robinson G.W."/>
            <person name="Mahon K.A."/>
        </authorList>
    </citation>
    <scope>DEVELOPMENTAL STAGE</scope>
    <source>
        <strain>FVB/N</strain>
    </source>
</reference>
<reference key="8">
    <citation type="journal article" date="2011" name="Neuroscience">
        <title>Brn-3b inhibits generation of amacrine cells by binding to and negatively regulating DLX1/2 in developing retina.</title>
        <authorList>
            <person name="Feng L."/>
            <person name="Eisenstat D.D."/>
            <person name="Chiba S."/>
            <person name="Ishizaki Y."/>
            <person name="Gan L."/>
            <person name="Shibasaki K."/>
        </authorList>
    </citation>
    <scope>FUNCTION</scope>
    <scope>INTERACTION WITH POU4F2</scope>
    <scope>TISSUE SPECIFICITY</scope>
    <scope>DEVELOPMENTAL STAGE</scope>
</reference>
<reference key="9">
    <citation type="journal article" date="2013" name="Mol. Endocrinol.">
        <title>Msx1 homeodomain protein represses the alphaGSU and GnRH receptor genes during gonadotrope development.</title>
        <authorList>
            <person name="Xie H."/>
            <person name="Cherrington B.D."/>
            <person name="Meadows J.D."/>
            <person name="Witham E.A."/>
            <person name="Mellon P.L."/>
        </authorList>
    </citation>
    <scope>FUNCTION</scope>
</reference>